<reference key="1">
    <citation type="journal article" date="2005" name="Science">
        <title>Genome streamlining in a cosmopolitan oceanic bacterium.</title>
        <authorList>
            <person name="Giovannoni S.J."/>
            <person name="Tripp H.J."/>
            <person name="Givan S."/>
            <person name="Podar M."/>
            <person name="Vergin K.L."/>
            <person name="Baptista D."/>
            <person name="Bibbs L."/>
            <person name="Eads J."/>
            <person name="Richardson T.H."/>
            <person name="Noordewier M."/>
            <person name="Rappe M.S."/>
            <person name="Short J.M."/>
            <person name="Carrington J.C."/>
            <person name="Mathur E.J."/>
        </authorList>
    </citation>
    <scope>NUCLEOTIDE SEQUENCE [LARGE SCALE GENOMIC DNA]</scope>
    <source>
        <strain>HTCC1062</strain>
    </source>
</reference>
<dbReference type="EC" id="2.7.7.60" evidence="1"/>
<dbReference type="EC" id="4.6.1.12" evidence="1"/>
<dbReference type="EMBL" id="CP000084">
    <property type="protein sequence ID" value="AAZ21757.1"/>
    <property type="molecule type" value="Genomic_DNA"/>
</dbReference>
<dbReference type="RefSeq" id="WP_011282059.1">
    <property type="nucleotide sequence ID" value="NC_007205.1"/>
</dbReference>
<dbReference type="SMR" id="Q4FM31"/>
<dbReference type="STRING" id="335992.SAR11_0945"/>
<dbReference type="GeneID" id="66295436"/>
<dbReference type="KEGG" id="pub:SAR11_0945"/>
<dbReference type="eggNOG" id="COG0245">
    <property type="taxonomic scope" value="Bacteria"/>
</dbReference>
<dbReference type="eggNOG" id="COG1211">
    <property type="taxonomic scope" value="Bacteria"/>
</dbReference>
<dbReference type="HOGENOM" id="CLU_042800_2_7_5"/>
<dbReference type="OrthoDB" id="9804336at2"/>
<dbReference type="UniPathway" id="UPA00056">
    <property type="reaction ID" value="UER00093"/>
</dbReference>
<dbReference type="UniPathway" id="UPA00056">
    <property type="reaction ID" value="UER00095"/>
</dbReference>
<dbReference type="Proteomes" id="UP000002528">
    <property type="component" value="Chromosome"/>
</dbReference>
<dbReference type="GO" id="GO:0008685">
    <property type="term" value="F:2-C-methyl-D-erythritol 2,4-cyclodiphosphate synthase activity"/>
    <property type="evidence" value="ECO:0007669"/>
    <property type="project" value="UniProtKB-UniRule"/>
</dbReference>
<dbReference type="GO" id="GO:0050518">
    <property type="term" value="F:2-C-methyl-D-erythritol 4-phosphate cytidylyltransferase activity"/>
    <property type="evidence" value="ECO:0007669"/>
    <property type="project" value="UniProtKB-UniRule"/>
</dbReference>
<dbReference type="GO" id="GO:0046872">
    <property type="term" value="F:metal ion binding"/>
    <property type="evidence" value="ECO:0007669"/>
    <property type="project" value="UniProtKB-KW"/>
</dbReference>
<dbReference type="GO" id="GO:0019288">
    <property type="term" value="P:isopentenyl diphosphate biosynthetic process, methylerythritol 4-phosphate pathway"/>
    <property type="evidence" value="ECO:0007669"/>
    <property type="project" value="UniProtKB-UniRule"/>
</dbReference>
<dbReference type="GO" id="GO:0016114">
    <property type="term" value="P:terpenoid biosynthetic process"/>
    <property type="evidence" value="ECO:0007669"/>
    <property type="project" value="InterPro"/>
</dbReference>
<dbReference type="CDD" id="cd02516">
    <property type="entry name" value="CDP-ME_synthetase"/>
    <property type="match status" value="1"/>
</dbReference>
<dbReference type="CDD" id="cd00554">
    <property type="entry name" value="MECDP_synthase"/>
    <property type="match status" value="1"/>
</dbReference>
<dbReference type="Gene3D" id="3.30.1330.50">
    <property type="entry name" value="2-C-methyl-D-erythritol 2,4-cyclodiphosphate synthase"/>
    <property type="match status" value="1"/>
</dbReference>
<dbReference type="Gene3D" id="3.90.550.10">
    <property type="entry name" value="Spore Coat Polysaccharide Biosynthesis Protein SpsA, Chain A"/>
    <property type="match status" value="1"/>
</dbReference>
<dbReference type="HAMAP" id="MF_01520">
    <property type="entry name" value="IspDF"/>
    <property type="match status" value="1"/>
</dbReference>
<dbReference type="HAMAP" id="MF_00107">
    <property type="entry name" value="IspF"/>
    <property type="match status" value="1"/>
</dbReference>
<dbReference type="InterPro" id="IPR001228">
    <property type="entry name" value="IspD"/>
</dbReference>
<dbReference type="InterPro" id="IPR026596">
    <property type="entry name" value="IspD/F"/>
</dbReference>
<dbReference type="InterPro" id="IPR034683">
    <property type="entry name" value="IspD/TarI"/>
</dbReference>
<dbReference type="InterPro" id="IPR018294">
    <property type="entry name" value="ISPD_synthase_CS"/>
</dbReference>
<dbReference type="InterPro" id="IPR003526">
    <property type="entry name" value="MECDP_synthase"/>
</dbReference>
<dbReference type="InterPro" id="IPR020555">
    <property type="entry name" value="MECDP_synthase_CS"/>
</dbReference>
<dbReference type="InterPro" id="IPR036571">
    <property type="entry name" value="MECDP_synthase_sf"/>
</dbReference>
<dbReference type="InterPro" id="IPR029044">
    <property type="entry name" value="Nucleotide-diphossugar_trans"/>
</dbReference>
<dbReference type="NCBIfam" id="TIGR00453">
    <property type="entry name" value="ispD"/>
    <property type="match status" value="1"/>
</dbReference>
<dbReference type="NCBIfam" id="TIGR00151">
    <property type="entry name" value="ispF"/>
    <property type="match status" value="1"/>
</dbReference>
<dbReference type="PANTHER" id="PTHR43181">
    <property type="entry name" value="2-C-METHYL-D-ERYTHRITOL 2,4-CYCLODIPHOSPHATE SYNTHASE, CHLOROPLASTIC"/>
    <property type="match status" value="1"/>
</dbReference>
<dbReference type="PANTHER" id="PTHR43181:SF1">
    <property type="entry name" value="2-C-METHYL-D-ERYTHRITOL 2,4-CYCLODIPHOSPHATE SYNTHASE, CHLOROPLASTIC"/>
    <property type="match status" value="1"/>
</dbReference>
<dbReference type="Pfam" id="PF01128">
    <property type="entry name" value="IspD"/>
    <property type="match status" value="1"/>
</dbReference>
<dbReference type="Pfam" id="PF02542">
    <property type="entry name" value="YgbB"/>
    <property type="match status" value="1"/>
</dbReference>
<dbReference type="SUPFAM" id="SSF69765">
    <property type="entry name" value="IpsF-like"/>
    <property type="match status" value="1"/>
</dbReference>
<dbReference type="SUPFAM" id="SSF53448">
    <property type="entry name" value="Nucleotide-diphospho-sugar transferases"/>
    <property type="match status" value="1"/>
</dbReference>
<dbReference type="PROSITE" id="PS01295">
    <property type="entry name" value="ISPD"/>
    <property type="match status" value="1"/>
</dbReference>
<dbReference type="PROSITE" id="PS01350">
    <property type="entry name" value="ISPF"/>
    <property type="match status" value="1"/>
</dbReference>
<evidence type="ECO:0000255" key="1">
    <source>
        <dbReference type="HAMAP-Rule" id="MF_01520"/>
    </source>
</evidence>
<organism>
    <name type="scientific">Pelagibacter ubique (strain HTCC1062)</name>
    <dbReference type="NCBI Taxonomy" id="335992"/>
    <lineage>
        <taxon>Bacteria</taxon>
        <taxon>Pseudomonadati</taxon>
        <taxon>Pseudomonadota</taxon>
        <taxon>Alphaproteobacteria</taxon>
        <taxon>Candidatus Pelagibacterales</taxon>
        <taxon>Candidatus Pelagibacteraceae</taxon>
        <taxon>Candidatus Pelagibacter</taxon>
    </lineage>
</organism>
<feature type="chain" id="PRO_0000075672" description="Bifunctional enzyme IspD/IspF">
    <location>
        <begin position="1"/>
        <end position="371"/>
    </location>
</feature>
<feature type="region of interest" description="2-C-methyl-D-erythritol 4-phosphate cytidylyltransferase" evidence="1">
    <location>
        <begin position="1"/>
        <end position="214"/>
    </location>
</feature>
<feature type="region of interest" description="2-C-methyl-D-erythritol 2,4-cyclodiphosphate synthase" evidence="1">
    <location>
        <begin position="215"/>
        <end position="371"/>
    </location>
</feature>
<feature type="binding site" evidence="1">
    <location>
        <begin position="221"/>
        <end position="223"/>
    </location>
    <ligand>
        <name>4-CDP-2-C-methyl-D-erythritol 2-phosphate</name>
        <dbReference type="ChEBI" id="CHEBI:57919"/>
    </ligand>
</feature>
<feature type="binding site" evidence="1">
    <location>
        <position position="221"/>
    </location>
    <ligand>
        <name>a divalent metal cation</name>
        <dbReference type="ChEBI" id="CHEBI:60240"/>
    </ligand>
</feature>
<feature type="binding site" evidence="1">
    <location>
        <position position="223"/>
    </location>
    <ligand>
        <name>a divalent metal cation</name>
        <dbReference type="ChEBI" id="CHEBI:60240"/>
    </ligand>
</feature>
<feature type="binding site" evidence="1">
    <location>
        <begin position="247"/>
        <end position="248"/>
    </location>
    <ligand>
        <name>4-CDP-2-C-methyl-D-erythritol 2-phosphate</name>
        <dbReference type="ChEBI" id="CHEBI:57919"/>
    </ligand>
</feature>
<feature type="binding site" evidence="1">
    <location>
        <position position="255"/>
    </location>
    <ligand>
        <name>a divalent metal cation</name>
        <dbReference type="ChEBI" id="CHEBI:60240"/>
    </ligand>
</feature>
<feature type="binding site" evidence="1">
    <location>
        <begin position="269"/>
        <end position="271"/>
    </location>
    <ligand>
        <name>4-CDP-2-C-methyl-D-erythritol 2-phosphate</name>
        <dbReference type="ChEBI" id="CHEBI:57919"/>
    </ligand>
</feature>
<feature type="binding site" evidence="1">
    <location>
        <begin position="274"/>
        <end position="278"/>
    </location>
    <ligand>
        <name>4-CDP-2-C-methyl-D-erythritol 2-phosphate</name>
        <dbReference type="ChEBI" id="CHEBI:57919"/>
    </ligand>
</feature>
<feature type="binding site" evidence="1">
    <location>
        <position position="355"/>
    </location>
    <ligand>
        <name>4-CDP-2-C-methyl-D-erythritol 2-phosphate</name>
        <dbReference type="ChEBI" id="CHEBI:57919"/>
    </ligand>
</feature>
<feature type="site" description="Transition state stabilizer" evidence="1">
    <location>
        <position position="15"/>
    </location>
</feature>
<feature type="site" description="Transition state stabilizer" evidence="1">
    <location>
        <position position="22"/>
    </location>
</feature>
<feature type="site" description="Positions MEP for the nucleophilic attack" evidence="1">
    <location>
        <position position="148"/>
    </location>
</feature>
<feature type="site" description="Positions MEP for the nucleophilic attack" evidence="1">
    <location>
        <position position="201"/>
    </location>
</feature>
<feature type="site" description="Transition state stabilizer" evidence="1">
    <location>
        <position position="247"/>
    </location>
</feature>
<feature type="site" description="Transition state stabilizer" evidence="1">
    <location>
        <position position="346"/>
    </location>
</feature>
<proteinExistence type="inferred from homology"/>
<accession>Q4FM31</accession>
<gene>
    <name evidence="1" type="primary">ispDF</name>
    <name type="ordered locus">SAR11_0945</name>
</gene>
<comment type="function">
    <text evidence="1">Bifunctional enzyme that catalyzes the formation of 4-diphosphocytidyl-2-C-methyl-D-erythritol from CTP and 2-C-methyl-D-erythritol 4-phosphate (MEP) (IspD), and catalyzes the conversion of 4-diphosphocytidyl-2-C-methyl-D-erythritol 2-phosphate (CDP-ME2P) to 2-C-methyl-D-erythritol 2,4-cyclodiphosphate (ME-CPP) with a corresponding release of cytidine 5-monophosphate (CMP) (IspF).</text>
</comment>
<comment type="catalytic activity">
    <reaction evidence="1">
        <text>2-C-methyl-D-erythritol 4-phosphate + CTP + H(+) = 4-CDP-2-C-methyl-D-erythritol + diphosphate</text>
        <dbReference type="Rhea" id="RHEA:13429"/>
        <dbReference type="ChEBI" id="CHEBI:15378"/>
        <dbReference type="ChEBI" id="CHEBI:33019"/>
        <dbReference type="ChEBI" id="CHEBI:37563"/>
        <dbReference type="ChEBI" id="CHEBI:57823"/>
        <dbReference type="ChEBI" id="CHEBI:58262"/>
        <dbReference type="EC" id="2.7.7.60"/>
    </reaction>
</comment>
<comment type="catalytic activity">
    <reaction evidence="1">
        <text>4-CDP-2-C-methyl-D-erythritol 2-phosphate = 2-C-methyl-D-erythritol 2,4-cyclic diphosphate + CMP</text>
        <dbReference type="Rhea" id="RHEA:23864"/>
        <dbReference type="ChEBI" id="CHEBI:57919"/>
        <dbReference type="ChEBI" id="CHEBI:58483"/>
        <dbReference type="ChEBI" id="CHEBI:60377"/>
        <dbReference type="EC" id="4.6.1.12"/>
    </reaction>
</comment>
<comment type="cofactor">
    <cofactor evidence="1">
        <name>a divalent metal cation</name>
        <dbReference type="ChEBI" id="CHEBI:60240"/>
    </cofactor>
</comment>
<comment type="pathway">
    <text evidence="1">Isoprenoid biosynthesis; isopentenyl diphosphate biosynthesis via DXP pathway; isopentenyl diphosphate from 1-deoxy-D-xylulose 5-phosphate: step 2/6.</text>
</comment>
<comment type="pathway">
    <text evidence="1">Isoprenoid biosynthesis; isopentenyl diphosphate biosynthesis via DXP pathway; isopentenyl diphosphate from 1-deoxy-D-xylulose 5-phosphate: step 4/6.</text>
</comment>
<comment type="similarity">
    <text evidence="1">In the N-terminal section; belongs to the IspD/TarI cytidylyltransferase family. IspD subfamily.</text>
</comment>
<comment type="similarity">
    <text evidence="1">In the C-terminal section; belongs to the IspF family.</text>
</comment>
<name>ISPDF_PELUB</name>
<protein>
    <recommendedName>
        <fullName evidence="1">Bifunctional enzyme IspD/IspF</fullName>
    </recommendedName>
    <domain>
        <recommendedName>
            <fullName evidence="1">2-C-methyl-D-erythritol 4-phosphate cytidylyltransferase</fullName>
            <ecNumber evidence="1">2.7.7.60</ecNumber>
        </recommendedName>
        <alternativeName>
            <fullName evidence="1">4-diphosphocytidyl-2C-methyl-D-erythritol synthase</fullName>
        </alternativeName>
        <alternativeName>
            <fullName evidence="1">MEP cytidylyltransferase</fullName>
            <shortName evidence="1">MCT</shortName>
        </alternativeName>
    </domain>
    <domain>
        <recommendedName>
            <fullName evidence="1">2-C-methyl-D-erythritol 2,4-cyclodiphosphate synthase</fullName>
            <shortName evidence="1">MECDP-synthase</shortName>
            <shortName evidence="1">MECPP-synthase</shortName>
            <shortName evidence="1">MECPS</shortName>
            <ecNumber evidence="1">4.6.1.12</ecNumber>
        </recommendedName>
    </domain>
</protein>
<sequence>MNSCFIILAGGESKRFNSNTPKPYTNYKGKPLLLHSIDKAKVFNKFNKIVLVVNKKHKNFIKKLNIKNIRIITGGKTRAESAYNALKSIKENNFKNVIIHDAARPNFSLKLLNKLMNELKLNDCVIPAIQTADTVKQKISNNVKNLKRENIYLIQTPQAFNYKKLFELQNNKSEEVTDDANLFVRAGKKIKIIKGETTNNKITINSDIKFNNLIKFGIGFDVHRLVPNKKLYLGGVKIPSPIGTLGHSDGDPVLHAVTDAILGACSMGDIGEKFSDKNKKFKNIRSTILLSEIIKQTLKKGYLINNLDINIITQKPKIQKYKKQILNCIAKICNISPTQINIKGKTTEKLGVIGKEKAIACEVIASVIKND</sequence>
<keyword id="KW-0414">Isoprene biosynthesis</keyword>
<keyword id="KW-0456">Lyase</keyword>
<keyword id="KW-0479">Metal-binding</keyword>
<keyword id="KW-0511">Multifunctional enzyme</keyword>
<keyword id="KW-0548">Nucleotidyltransferase</keyword>
<keyword id="KW-1185">Reference proteome</keyword>
<keyword id="KW-0808">Transferase</keyword>